<accession>B5RH31</accession>
<gene>
    <name evidence="1" type="primary">rplR</name>
    <name type="ordered locus">SG4015</name>
</gene>
<dbReference type="EMBL" id="AM933173">
    <property type="protein sequence ID" value="CAR39785.1"/>
    <property type="molecule type" value="Genomic_DNA"/>
</dbReference>
<dbReference type="RefSeq" id="WP_000358956.1">
    <property type="nucleotide sequence ID" value="NC_011274.1"/>
</dbReference>
<dbReference type="SMR" id="B5RH31"/>
<dbReference type="GeneID" id="93035747"/>
<dbReference type="KEGG" id="seg:SG4015"/>
<dbReference type="HOGENOM" id="CLU_098841_0_1_6"/>
<dbReference type="Proteomes" id="UP000008321">
    <property type="component" value="Chromosome"/>
</dbReference>
<dbReference type="GO" id="GO:0022625">
    <property type="term" value="C:cytosolic large ribosomal subunit"/>
    <property type="evidence" value="ECO:0007669"/>
    <property type="project" value="TreeGrafter"/>
</dbReference>
<dbReference type="GO" id="GO:0008097">
    <property type="term" value="F:5S rRNA binding"/>
    <property type="evidence" value="ECO:0007669"/>
    <property type="project" value="TreeGrafter"/>
</dbReference>
<dbReference type="GO" id="GO:0003735">
    <property type="term" value="F:structural constituent of ribosome"/>
    <property type="evidence" value="ECO:0007669"/>
    <property type="project" value="InterPro"/>
</dbReference>
<dbReference type="GO" id="GO:0006412">
    <property type="term" value="P:translation"/>
    <property type="evidence" value="ECO:0007669"/>
    <property type="project" value="UniProtKB-UniRule"/>
</dbReference>
<dbReference type="CDD" id="cd00432">
    <property type="entry name" value="Ribosomal_L18_L5e"/>
    <property type="match status" value="1"/>
</dbReference>
<dbReference type="FunFam" id="3.30.420.100:FF:000001">
    <property type="entry name" value="50S ribosomal protein L18"/>
    <property type="match status" value="1"/>
</dbReference>
<dbReference type="Gene3D" id="3.30.420.100">
    <property type="match status" value="1"/>
</dbReference>
<dbReference type="HAMAP" id="MF_01337_B">
    <property type="entry name" value="Ribosomal_uL18_B"/>
    <property type="match status" value="1"/>
</dbReference>
<dbReference type="InterPro" id="IPR004389">
    <property type="entry name" value="Ribosomal_uL18_bac-type"/>
</dbReference>
<dbReference type="InterPro" id="IPR005484">
    <property type="entry name" value="Ribosomal_uL18_bac/euk"/>
</dbReference>
<dbReference type="NCBIfam" id="TIGR00060">
    <property type="entry name" value="L18_bact"/>
    <property type="match status" value="1"/>
</dbReference>
<dbReference type="PANTHER" id="PTHR12899">
    <property type="entry name" value="39S RIBOSOMAL PROTEIN L18, MITOCHONDRIAL"/>
    <property type="match status" value="1"/>
</dbReference>
<dbReference type="PANTHER" id="PTHR12899:SF3">
    <property type="entry name" value="LARGE RIBOSOMAL SUBUNIT PROTEIN UL18M"/>
    <property type="match status" value="1"/>
</dbReference>
<dbReference type="Pfam" id="PF00861">
    <property type="entry name" value="Ribosomal_L18p"/>
    <property type="match status" value="1"/>
</dbReference>
<dbReference type="SUPFAM" id="SSF53137">
    <property type="entry name" value="Translational machinery components"/>
    <property type="match status" value="1"/>
</dbReference>
<proteinExistence type="inferred from homology"/>
<keyword id="KW-0687">Ribonucleoprotein</keyword>
<keyword id="KW-0689">Ribosomal protein</keyword>
<keyword id="KW-0694">RNA-binding</keyword>
<keyword id="KW-0699">rRNA-binding</keyword>
<comment type="function">
    <text evidence="1">This is one of the proteins that bind and probably mediate the attachment of the 5S RNA into the large ribosomal subunit, where it forms part of the central protuberance.</text>
</comment>
<comment type="subunit">
    <text evidence="1">Part of the 50S ribosomal subunit; part of the 5S rRNA/L5/L18/L25 subcomplex. Contacts the 5S and 23S rRNAs.</text>
</comment>
<comment type="similarity">
    <text evidence="1">Belongs to the universal ribosomal protein uL18 family.</text>
</comment>
<reference key="1">
    <citation type="journal article" date="2008" name="Genome Res.">
        <title>Comparative genome analysis of Salmonella enteritidis PT4 and Salmonella gallinarum 287/91 provides insights into evolutionary and host adaptation pathways.</title>
        <authorList>
            <person name="Thomson N.R."/>
            <person name="Clayton D.J."/>
            <person name="Windhorst D."/>
            <person name="Vernikos G."/>
            <person name="Davidson S."/>
            <person name="Churcher C."/>
            <person name="Quail M.A."/>
            <person name="Stevens M."/>
            <person name="Jones M.A."/>
            <person name="Watson M."/>
            <person name="Barron A."/>
            <person name="Layton A."/>
            <person name="Pickard D."/>
            <person name="Kingsley R.A."/>
            <person name="Bignell A."/>
            <person name="Clark L."/>
            <person name="Harris B."/>
            <person name="Ormond D."/>
            <person name="Abdellah Z."/>
            <person name="Brooks K."/>
            <person name="Cherevach I."/>
            <person name="Chillingworth T."/>
            <person name="Woodward J."/>
            <person name="Norberczak H."/>
            <person name="Lord A."/>
            <person name="Arrowsmith C."/>
            <person name="Jagels K."/>
            <person name="Moule S."/>
            <person name="Mungall K."/>
            <person name="Saunders M."/>
            <person name="Whitehead S."/>
            <person name="Chabalgoity J.A."/>
            <person name="Maskell D."/>
            <person name="Humphreys T."/>
            <person name="Roberts M."/>
            <person name="Barrow P.A."/>
            <person name="Dougan G."/>
            <person name="Parkhill J."/>
        </authorList>
    </citation>
    <scope>NUCLEOTIDE SEQUENCE [LARGE SCALE GENOMIC DNA]</scope>
    <source>
        <strain>287/91 / NCTC 13346</strain>
    </source>
</reference>
<organism>
    <name type="scientific">Salmonella gallinarum (strain 287/91 / NCTC 13346)</name>
    <dbReference type="NCBI Taxonomy" id="550538"/>
    <lineage>
        <taxon>Bacteria</taxon>
        <taxon>Pseudomonadati</taxon>
        <taxon>Pseudomonadota</taxon>
        <taxon>Gammaproteobacteria</taxon>
        <taxon>Enterobacterales</taxon>
        <taxon>Enterobacteriaceae</taxon>
        <taxon>Salmonella</taxon>
    </lineage>
</organism>
<protein>
    <recommendedName>
        <fullName evidence="1">Large ribosomal subunit protein uL18</fullName>
    </recommendedName>
    <alternativeName>
        <fullName evidence="2">50S ribosomal protein L18</fullName>
    </alternativeName>
</protein>
<sequence length="117" mass="12770">MDKKSARIRRATRARRKLKELGATRLVVHRTPRHIYAQVIAPNGSEVLVAASTVEKAIAEQLKYTGNKDAAAAVGKAVAERALEKGIKDVSFDRSGFQYHGRVQALADAAREAGLQF</sequence>
<evidence type="ECO:0000255" key="1">
    <source>
        <dbReference type="HAMAP-Rule" id="MF_01337"/>
    </source>
</evidence>
<evidence type="ECO:0000305" key="2"/>
<name>RL18_SALG2</name>
<feature type="chain" id="PRO_1000142714" description="Large ribosomal subunit protein uL18">
    <location>
        <begin position="1"/>
        <end position="117"/>
    </location>
</feature>